<gene>
    <name type="primary">PERK6</name>
    <name type="ordered locus">At3g18810</name>
    <name type="ORF">MVE11.19</name>
</gene>
<organism>
    <name type="scientific">Arabidopsis thaliana</name>
    <name type="common">Mouse-ear cress</name>
    <dbReference type="NCBI Taxonomy" id="3702"/>
    <lineage>
        <taxon>Eukaryota</taxon>
        <taxon>Viridiplantae</taxon>
        <taxon>Streptophyta</taxon>
        <taxon>Embryophyta</taxon>
        <taxon>Tracheophyta</taxon>
        <taxon>Spermatophyta</taxon>
        <taxon>Magnoliopsida</taxon>
        <taxon>eudicotyledons</taxon>
        <taxon>Gunneridae</taxon>
        <taxon>Pentapetalae</taxon>
        <taxon>rosids</taxon>
        <taxon>malvids</taxon>
        <taxon>Brassicales</taxon>
        <taxon>Brassicaceae</taxon>
        <taxon>Camelineae</taxon>
        <taxon>Arabidopsis</taxon>
    </lineage>
</organism>
<comment type="catalytic activity">
    <reaction>
        <text>L-seryl-[protein] + ATP = O-phospho-L-seryl-[protein] + ADP + H(+)</text>
        <dbReference type="Rhea" id="RHEA:17989"/>
        <dbReference type="Rhea" id="RHEA-COMP:9863"/>
        <dbReference type="Rhea" id="RHEA-COMP:11604"/>
        <dbReference type="ChEBI" id="CHEBI:15378"/>
        <dbReference type="ChEBI" id="CHEBI:29999"/>
        <dbReference type="ChEBI" id="CHEBI:30616"/>
        <dbReference type="ChEBI" id="CHEBI:83421"/>
        <dbReference type="ChEBI" id="CHEBI:456216"/>
        <dbReference type="EC" id="2.7.11.1"/>
    </reaction>
</comment>
<comment type="catalytic activity">
    <reaction>
        <text>L-threonyl-[protein] + ATP = O-phospho-L-threonyl-[protein] + ADP + H(+)</text>
        <dbReference type="Rhea" id="RHEA:46608"/>
        <dbReference type="Rhea" id="RHEA-COMP:11060"/>
        <dbReference type="Rhea" id="RHEA-COMP:11605"/>
        <dbReference type="ChEBI" id="CHEBI:15378"/>
        <dbReference type="ChEBI" id="CHEBI:30013"/>
        <dbReference type="ChEBI" id="CHEBI:30616"/>
        <dbReference type="ChEBI" id="CHEBI:61977"/>
        <dbReference type="ChEBI" id="CHEBI:456216"/>
        <dbReference type="EC" id="2.7.11.1"/>
    </reaction>
</comment>
<comment type="subcellular location">
    <subcellularLocation>
        <location evidence="1">Cell membrane</location>
        <topology evidence="1">Single-pass membrane protein</topology>
    </subcellularLocation>
</comment>
<comment type="tissue specificity">
    <text evidence="7">Mostly expressed in flower buds.</text>
</comment>
<comment type="similarity">
    <text evidence="4">Belongs to the protein kinase superfamily. Ser/Thr protein kinase family.</text>
</comment>
<comment type="sequence caution" evidence="8">
    <conflict type="erroneous gene model prediction">
        <sequence resource="EMBL-CDS" id="BAB01809"/>
    </conflict>
</comment>
<feature type="chain" id="PRO_0000400058" description="Putative proline-rich receptor-like protein kinase PERK6">
    <location>
        <begin position="1"/>
        <end position="700"/>
    </location>
</feature>
<feature type="topological domain" description="Extracellular" evidence="3">
    <location>
        <begin position="1"/>
        <end position="186"/>
    </location>
</feature>
<feature type="transmembrane region" description="Helical" evidence="3">
    <location>
        <begin position="187"/>
        <end position="207"/>
    </location>
</feature>
<feature type="topological domain" description="Cytoplasmic" evidence="3">
    <location>
        <begin position="208"/>
        <end position="700"/>
    </location>
</feature>
<feature type="domain" description="Protein kinase" evidence="4">
    <location>
        <begin position="337"/>
        <end position="615"/>
    </location>
</feature>
<feature type="region of interest" description="Disordered" evidence="6">
    <location>
        <begin position="1"/>
        <end position="180"/>
    </location>
</feature>
<feature type="region of interest" description="Disordered" evidence="6">
    <location>
        <begin position="249"/>
        <end position="315"/>
    </location>
</feature>
<feature type="region of interest" description="Disordered" evidence="6">
    <location>
        <begin position="616"/>
        <end position="642"/>
    </location>
</feature>
<feature type="region of interest" description="Disordered" evidence="6">
    <location>
        <begin position="659"/>
        <end position="700"/>
    </location>
</feature>
<feature type="compositionally biased region" description="Pro residues" evidence="6">
    <location>
        <begin position="9"/>
        <end position="19"/>
    </location>
</feature>
<feature type="compositionally biased region" description="Pro residues" evidence="6">
    <location>
        <begin position="29"/>
        <end position="47"/>
    </location>
</feature>
<feature type="compositionally biased region" description="Low complexity" evidence="6">
    <location>
        <begin position="48"/>
        <end position="137"/>
    </location>
</feature>
<feature type="compositionally biased region" description="Low complexity" evidence="6">
    <location>
        <begin position="255"/>
        <end position="265"/>
    </location>
</feature>
<feature type="compositionally biased region" description="Pro residues" evidence="6">
    <location>
        <begin position="266"/>
        <end position="286"/>
    </location>
</feature>
<feature type="compositionally biased region" description="Polar residues" evidence="6">
    <location>
        <begin position="689"/>
        <end position="700"/>
    </location>
</feature>
<feature type="active site" description="Proton acceptor" evidence="4 5">
    <location>
        <position position="461"/>
    </location>
</feature>
<feature type="binding site" evidence="4">
    <location>
        <begin position="343"/>
        <end position="351"/>
    </location>
    <ligand>
        <name>ATP</name>
        <dbReference type="ChEBI" id="CHEBI:30616"/>
    </ligand>
</feature>
<feature type="binding site" evidence="4">
    <location>
        <position position="365"/>
    </location>
    <ligand>
        <name>ATP</name>
        <dbReference type="ChEBI" id="CHEBI:30616"/>
    </ligand>
</feature>
<feature type="modified residue" description="Phosphothreonine" evidence="2">
    <location>
        <position position="326"/>
    </location>
</feature>
<feature type="modified residue" description="Phosphotyrosine" evidence="2">
    <location>
        <position position="410"/>
    </location>
</feature>
<feature type="modified residue" description="Phosphoserine" evidence="2">
    <location>
        <position position="465"/>
    </location>
</feature>
<feature type="modified residue" description="Phosphoserine" evidence="2">
    <location>
        <position position="494"/>
    </location>
</feature>
<feature type="modified residue" description="Phosphothreonine" evidence="2">
    <location>
        <position position="495"/>
    </location>
</feature>
<feature type="modified residue" description="Phosphothreonine" evidence="2">
    <location>
        <position position="500"/>
    </location>
</feature>
<feature type="modified residue" description="Phosphotyrosine" evidence="2">
    <location>
        <position position="508"/>
    </location>
</feature>
<feature type="glycosylation site" description="N-linked (GlcNAc...) asparagine" evidence="3">
    <location>
        <position position="176"/>
    </location>
</feature>
<protein>
    <recommendedName>
        <fullName>Putative proline-rich receptor-like protein kinase PERK6</fullName>
        <ecNumber>2.7.11.1</ecNumber>
    </recommendedName>
    <alternativeName>
        <fullName>Proline-rich extensin-like receptor kinase 6</fullName>
        <shortName>AtPERK6</shortName>
    </alternativeName>
</protein>
<accession>Q9LS95</accession>
<name>PERK6_ARATH</name>
<dbReference type="EC" id="2.7.11.1"/>
<dbReference type="EMBL" id="AB026654">
    <property type="protein sequence ID" value="BAB01809.1"/>
    <property type="status" value="ALT_SEQ"/>
    <property type="molecule type" value="Genomic_DNA"/>
</dbReference>
<dbReference type="EMBL" id="CP002686">
    <property type="protein sequence ID" value="AEE76151.1"/>
    <property type="molecule type" value="Genomic_DNA"/>
</dbReference>
<dbReference type="RefSeq" id="NP_188511.1">
    <property type="nucleotide sequence ID" value="NM_112767.2"/>
</dbReference>
<dbReference type="SMR" id="Q9LS95"/>
<dbReference type="STRING" id="3702.Q9LS95"/>
<dbReference type="GlyCosmos" id="Q9LS95">
    <property type="glycosylation" value="1 site, No reported glycans"/>
</dbReference>
<dbReference type="GlyGen" id="Q9LS95">
    <property type="glycosylation" value="2 sites"/>
</dbReference>
<dbReference type="iPTMnet" id="Q9LS95"/>
<dbReference type="PaxDb" id="3702-AT3G18810.1"/>
<dbReference type="ProteomicsDB" id="236395"/>
<dbReference type="EnsemblPlants" id="AT3G18810.1">
    <property type="protein sequence ID" value="AT3G18810.1"/>
    <property type="gene ID" value="AT3G18810"/>
</dbReference>
<dbReference type="GeneID" id="821414"/>
<dbReference type="Gramene" id="AT3G18810.1">
    <property type="protein sequence ID" value="AT3G18810.1"/>
    <property type="gene ID" value="AT3G18810"/>
</dbReference>
<dbReference type="KEGG" id="ath:AT3G18810"/>
<dbReference type="Araport" id="AT3G18810"/>
<dbReference type="TAIR" id="AT3G18810">
    <property type="gene designation" value="PERK6"/>
</dbReference>
<dbReference type="eggNOG" id="KOG1187">
    <property type="taxonomic scope" value="Eukaryota"/>
</dbReference>
<dbReference type="HOGENOM" id="CLU_000288_106_6_1"/>
<dbReference type="InParanoid" id="Q9LS95"/>
<dbReference type="OMA" id="YEPHEMA"/>
<dbReference type="PhylomeDB" id="Q9LS95"/>
<dbReference type="PRO" id="PR:Q9LS95"/>
<dbReference type="Proteomes" id="UP000006548">
    <property type="component" value="Chromosome 3"/>
</dbReference>
<dbReference type="ExpressionAtlas" id="Q9LS95">
    <property type="expression patterns" value="baseline and differential"/>
</dbReference>
<dbReference type="GO" id="GO:0005886">
    <property type="term" value="C:plasma membrane"/>
    <property type="evidence" value="ECO:0007669"/>
    <property type="project" value="UniProtKB-SubCell"/>
</dbReference>
<dbReference type="GO" id="GO:0005524">
    <property type="term" value="F:ATP binding"/>
    <property type="evidence" value="ECO:0007669"/>
    <property type="project" value="UniProtKB-KW"/>
</dbReference>
<dbReference type="GO" id="GO:0106310">
    <property type="term" value="F:protein serine kinase activity"/>
    <property type="evidence" value="ECO:0007669"/>
    <property type="project" value="RHEA"/>
</dbReference>
<dbReference type="GO" id="GO:0004674">
    <property type="term" value="F:protein serine/threonine kinase activity"/>
    <property type="evidence" value="ECO:0007669"/>
    <property type="project" value="UniProtKB-KW"/>
</dbReference>
<dbReference type="FunFam" id="1.10.510.10:FF:000239">
    <property type="entry name" value="Proline-rich receptor-like protein kinase PERK1"/>
    <property type="match status" value="1"/>
</dbReference>
<dbReference type="FunFam" id="3.30.200.20:FF:000207">
    <property type="entry name" value="proline-rich receptor-like protein kinase PERK1"/>
    <property type="match status" value="1"/>
</dbReference>
<dbReference type="Gene3D" id="3.30.200.20">
    <property type="entry name" value="Phosphorylase Kinase, domain 1"/>
    <property type="match status" value="1"/>
</dbReference>
<dbReference type="Gene3D" id="1.10.510.10">
    <property type="entry name" value="Transferase(Phosphotransferase) domain 1"/>
    <property type="match status" value="1"/>
</dbReference>
<dbReference type="InterPro" id="IPR011009">
    <property type="entry name" value="Kinase-like_dom_sf"/>
</dbReference>
<dbReference type="InterPro" id="IPR047117">
    <property type="entry name" value="PERK1-13-like"/>
</dbReference>
<dbReference type="InterPro" id="IPR000719">
    <property type="entry name" value="Prot_kinase_dom"/>
</dbReference>
<dbReference type="InterPro" id="IPR017441">
    <property type="entry name" value="Protein_kinase_ATP_BS"/>
</dbReference>
<dbReference type="InterPro" id="IPR001245">
    <property type="entry name" value="Ser-Thr/Tyr_kinase_cat_dom"/>
</dbReference>
<dbReference type="InterPro" id="IPR008271">
    <property type="entry name" value="Ser/Thr_kinase_AS"/>
</dbReference>
<dbReference type="PANTHER" id="PTHR47982">
    <property type="entry name" value="PROLINE-RICH RECEPTOR-LIKE PROTEIN KINASE PERK4"/>
    <property type="match status" value="1"/>
</dbReference>
<dbReference type="PANTHER" id="PTHR47982:SF47">
    <property type="entry name" value="PROLINE-RICH RECEPTOR-LIKE PROTEIN KINASE PERK6-RELATED"/>
    <property type="match status" value="1"/>
</dbReference>
<dbReference type="Pfam" id="PF07714">
    <property type="entry name" value="PK_Tyr_Ser-Thr"/>
    <property type="match status" value="1"/>
</dbReference>
<dbReference type="SMART" id="SM00220">
    <property type="entry name" value="S_TKc"/>
    <property type="match status" value="1"/>
</dbReference>
<dbReference type="SUPFAM" id="SSF56112">
    <property type="entry name" value="Protein kinase-like (PK-like)"/>
    <property type="match status" value="1"/>
</dbReference>
<dbReference type="PROSITE" id="PS00107">
    <property type="entry name" value="PROTEIN_KINASE_ATP"/>
    <property type="match status" value="1"/>
</dbReference>
<dbReference type="PROSITE" id="PS50011">
    <property type="entry name" value="PROTEIN_KINASE_DOM"/>
    <property type="match status" value="1"/>
</dbReference>
<dbReference type="PROSITE" id="PS00108">
    <property type="entry name" value="PROTEIN_KINASE_ST"/>
    <property type="match status" value="1"/>
</dbReference>
<sequence>MAEGQSPENSPPSPTPPSPSSSDNQQQSSPPPSDSSSPSPPAPPPPDDSSNGSPQPPSSDSQSPPSPQGNNNNDGNNGNNNNDNNNNNNGNNNNDNNNGNNKDNNNNGNNNNGNNNNGNDNNGNNNNGNNNDNNNQNNGGGSNNRSPPPPSRNSDRNSPSPPRALAPPRSSGGGSNSSGNNEPNTAAIVGIVAGAGLLFLVMILFCVCCCRKKKKKHQMPYYAGNGYATGKGDQYQQQQYNNQSDHVMNLSQQYPGSNGNNNWMNSPPPPPPGSWQPSPPPPPPPVSGGMNGNSSDFSSNYSGPHGPSVPPPHPSVALGFNKSTFTYDELAAATQGFSQSRLLGQGGFGYVHKGILPNGKEIAVKSLKAGSGQGEREFQAEVDIISRVHHRFLVSLVGYCIAGGQRMLVYEFLPNDTLEFHLHGKSGKVLDWPTRLKIALGSAKGLAYLHEDCHPRIIHRDIKASNILLDESFEAKVADFGLAKLSQDNVTHVSTRIMGTFGYLAPEYASSGKLTDRSDVFSFGVMLLELVTGRRPVDLTGEMEDSLVDWARPICLNAAQDGDYSELVDPRLENQYEPHEMAQMVACAAAAVRHSARRRPKMSQIVRALEGDATLDDLSEGGKAGQSSFLGRGSSSDYDSSTYSADMKKFRKVALDSHEYGASSEYGNTSEYGLDPSSSSSEEIRRGGANNNKTTPSRDH</sequence>
<keyword id="KW-0067">ATP-binding</keyword>
<keyword id="KW-1003">Cell membrane</keyword>
<keyword id="KW-0325">Glycoprotein</keyword>
<keyword id="KW-0418">Kinase</keyword>
<keyword id="KW-0472">Membrane</keyword>
<keyword id="KW-0547">Nucleotide-binding</keyword>
<keyword id="KW-0597">Phosphoprotein</keyword>
<keyword id="KW-0675">Receptor</keyword>
<keyword id="KW-1185">Reference proteome</keyword>
<keyword id="KW-0723">Serine/threonine-protein kinase</keyword>
<keyword id="KW-0808">Transferase</keyword>
<keyword id="KW-0812">Transmembrane</keyword>
<keyword id="KW-1133">Transmembrane helix</keyword>
<proteinExistence type="evidence at transcript level"/>
<reference key="1">
    <citation type="journal article" date="2000" name="DNA Res.">
        <title>Structural analysis of Arabidopsis thaliana chromosome 3. I. Sequence features of the regions of 4,504,864 bp covered by sixty P1 and TAC clones.</title>
        <authorList>
            <person name="Sato S."/>
            <person name="Nakamura Y."/>
            <person name="Kaneko T."/>
            <person name="Katoh T."/>
            <person name="Asamizu E."/>
            <person name="Tabata S."/>
        </authorList>
    </citation>
    <scope>NUCLEOTIDE SEQUENCE [LARGE SCALE GENOMIC DNA]</scope>
    <source>
        <strain>cv. Columbia</strain>
    </source>
</reference>
<reference key="2">
    <citation type="journal article" date="2017" name="Plant J.">
        <title>Araport11: a complete reannotation of the Arabidopsis thaliana reference genome.</title>
        <authorList>
            <person name="Cheng C.Y."/>
            <person name="Krishnakumar V."/>
            <person name="Chan A.P."/>
            <person name="Thibaud-Nissen F."/>
            <person name="Schobel S."/>
            <person name="Town C.D."/>
        </authorList>
    </citation>
    <scope>GENOME REANNOTATION</scope>
    <source>
        <strain>cv. Columbia</strain>
    </source>
</reference>
<reference key="3">
    <citation type="journal article" date="2002" name="Plant Mol. Biol.">
        <title>The proline-rich, extensin-like receptor kinase-1 (PERK1) gene is rapidly induced by wounding.</title>
        <authorList>
            <person name="Silva N.F."/>
            <person name="Goring D.R."/>
        </authorList>
    </citation>
    <scope>GENE FAMILY</scope>
</reference>
<reference key="4">
    <citation type="journal article" date="2004" name="Plant Cell Physiol.">
        <title>A comprehensive expression analysis of the Arabidopsis proline-rich extensin-like receptor kinase gene family using bioinformatic and experimental approaches.</title>
        <authorList>
            <person name="Nakhamchik A."/>
            <person name="Zhao Z."/>
            <person name="Provart N.J."/>
            <person name="Shiu S.-H."/>
            <person name="Keatley S.K."/>
            <person name="Cameron R.K."/>
            <person name="Goring D.R."/>
        </authorList>
    </citation>
    <scope>TISSUE SPECIFICITY</scope>
    <scope>GENE FAMILY</scope>
    <scope>NOMENCLATURE</scope>
</reference>
<evidence type="ECO:0000250" key="1"/>
<evidence type="ECO:0000250" key="2">
    <source>
        <dbReference type="UniProtKB" id="O48814"/>
    </source>
</evidence>
<evidence type="ECO:0000255" key="3"/>
<evidence type="ECO:0000255" key="4">
    <source>
        <dbReference type="PROSITE-ProRule" id="PRU00159"/>
    </source>
</evidence>
<evidence type="ECO:0000255" key="5">
    <source>
        <dbReference type="PROSITE-ProRule" id="PRU10027"/>
    </source>
</evidence>
<evidence type="ECO:0000256" key="6">
    <source>
        <dbReference type="SAM" id="MobiDB-lite"/>
    </source>
</evidence>
<evidence type="ECO:0000269" key="7">
    <source>
    </source>
</evidence>
<evidence type="ECO:0000305" key="8"/>